<gene>
    <name type="ordered locus">FTL_1400</name>
</gene>
<sequence length="62" mass="7142">MDHSVLNVLVCPICKANLYYDKENQVLVCKADKLAYPIRENIPVMLVEEAKKMTLEEVKKYG</sequence>
<evidence type="ECO:0000255" key="1">
    <source>
        <dbReference type="HAMAP-Rule" id="MF_01187"/>
    </source>
</evidence>
<evidence type="ECO:0000305" key="2"/>
<accession>Q2A2J7</accession>
<dbReference type="EMBL" id="AM233362">
    <property type="protein sequence ID" value="CAJ79839.1"/>
    <property type="status" value="ALT_INIT"/>
    <property type="molecule type" value="Genomic_DNA"/>
</dbReference>
<dbReference type="RefSeq" id="WP_003016659.1">
    <property type="nucleotide sequence ID" value="NZ_CP009694.1"/>
</dbReference>
<dbReference type="SMR" id="Q2A2J7"/>
<dbReference type="KEGG" id="ftl:FTL_1400"/>
<dbReference type="Proteomes" id="UP000001944">
    <property type="component" value="Chromosome"/>
</dbReference>
<dbReference type="GO" id="GO:0005829">
    <property type="term" value="C:cytosol"/>
    <property type="evidence" value="ECO:0007669"/>
    <property type="project" value="TreeGrafter"/>
</dbReference>
<dbReference type="FunFam" id="2.20.25.10:FF:000002">
    <property type="entry name" value="UPF0434 protein YcaR"/>
    <property type="match status" value="1"/>
</dbReference>
<dbReference type="Gene3D" id="2.20.25.10">
    <property type="match status" value="1"/>
</dbReference>
<dbReference type="HAMAP" id="MF_01187">
    <property type="entry name" value="UPF0434"/>
    <property type="match status" value="1"/>
</dbReference>
<dbReference type="InterPro" id="IPR005651">
    <property type="entry name" value="Trm112-like"/>
</dbReference>
<dbReference type="PANTHER" id="PTHR33505:SF4">
    <property type="entry name" value="PROTEIN PREY, MITOCHONDRIAL"/>
    <property type="match status" value="1"/>
</dbReference>
<dbReference type="PANTHER" id="PTHR33505">
    <property type="entry name" value="ZGC:162634"/>
    <property type="match status" value="1"/>
</dbReference>
<dbReference type="Pfam" id="PF03966">
    <property type="entry name" value="Trm112p"/>
    <property type="match status" value="1"/>
</dbReference>
<dbReference type="SUPFAM" id="SSF158997">
    <property type="entry name" value="Trm112p-like"/>
    <property type="match status" value="1"/>
</dbReference>
<protein>
    <recommendedName>
        <fullName evidence="1">UPF0434 protein FTL_1400</fullName>
    </recommendedName>
</protein>
<proteinExistence type="inferred from homology"/>
<keyword id="KW-1185">Reference proteome</keyword>
<organism>
    <name type="scientific">Francisella tularensis subsp. holarctica (strain LVS)</name>
    <dbReference type="NCBI Taxonomy" id="376619"/>
    <lineage>
        <taxon>Bacteria</taxon>
        <taxon>Pseudomonadati</taxon>
        <taxon>Pseudomonadota</taxon>
        <taxon>Gammaproteobacteria</taxon>
        <taxon>Thiotrichales</taxon>
        <taxon>Francisellaceae</taxon>
        <taxon>Francisella</taxon>
    </lineage>
</organism>
<feature type="chain" id="PRO_0000291092" description="UPF0434 protein FTL_1400">
    <location>
        <begin position="1"/>
        <end position="62"/>
    </location>
</feature>
<name>Y1400_FRATH</name>
<comment type="similarity">
    <text evidence="1">Belongs to the UPF0434 family.</text>
</comment>
<comment type="sequence caution" evidence="2">
    <conflict type="erroneous initiation">
        <sequence resource="EMBL-CDS" id="CAJ79839"/>
    </conflict>
</comment>
<reference key="1">
    <citation type="submission" date="2006-03" db="EMBL/GenBank/DDBJ databases">
        <title>Complete genome sequence of Francisella tularensis LVS (Live Vaccine Strain).</title>
        <authorList>
            <person name="Chain P."/>
            <person name="Larimer F."/>
            <person name="Land M."/>
            <person name="Stilwagen S."/>
            <person name="Larsson P."/>
            <person name="Bearden S."/>
            <person name="Chu M."/>
            <person name="Oyston P."/>
            <person name="Forsman M."/>
            <person name="Andersson S."/>
            <person name="Lindler L."/>
            <person name="Titball R."/>
            <person name="Garcia E."/>
        </authorList>
    </citation>
    <scope>NUCLEOTIDE SEQUENCE [LARGE SCALE GENOMIC DNA]</scope>
    <source>
        <strain>LVS</strain>
    </source>
</reference>